<proteinExistence type="inferred from homology"/>
<name>MRAZ_RHOOB</name>
<organism>
    <name type="scientific">Rhodococcus opacus (strain B4)</name>
    <dbReference type="NCBI Taxonomy" id="632772"/>
    <lineage>
        <taxon>Bacteria</taxon>
        <taxon>Bacillati</taxon>
        <taxon>Actinomycetota</taxon>
        <taxon>Actinomycetes</taxon>
        <taxon>Mycobacteriales</taxon>
        <taxon>Nocardiaceae</taxon>
        <taxon>Rhodococcus</taxon>
    </lineage>
</organism>
<evidence type="ECO:0000255" key="1">
    <source>
        <dbReference type="HAMAP-Rule" id="MF_01008"/>
    </source>
</evidence>
<evidence type="ECO:0000255" key="2">
    <source>
        <dbReference type="PROSITE-ProRule" id="PRU01076"/>
    </source>
</evidence>
<gene>
    <name evidence="1" type="primary">mraZ</name>
    <name type="ordered locus">ROP_08250</name>
</gene>
<keyword id="KW-0963">Cytoplasm</keyword>
<keyword id="KW-0238">DNA-binding</keyword>
<keyword id="KW-0677">Repeat</keyword>
<keyword id="KW-0804">Transcription</keyword>
<keyword id="KW-0805">Transcription regulation</keyword>
<protein>
    <recommendedName>
        <fullName>Transcriptional regulator MraZ</fullName>
    </recommendedName>
</protein>
<dbReference type="EMBL" id="AP011115">
    <property type="protein sequence ID" value="BAH49072.1"/>
    <property type="molecule type" value="Genomic_DNA"/>
</dbReference>
<dbReference type="RefSeq" id="WP_012688067.1">
    <property type="nucleotide sequence ID" value="NC_012522.1"/>
</dbReference>
<dbReference type="SMR" id="C1AU64"/>
<dbReference type="STRING" id="632772.ROP_08250"/>
<dbReference type="KEGG" id="rop:ROP_08250"/>
<dbReference type="PATRIC" id="fig|632772.20.peg.888"/>
<dbReference type="HOGENOM" id="CLU_107907_0_5_11"/>
<dbReference type="OrthoDB" id="9807753at2"/>
<dbReference type="Proteomes" id="UP000002212">
    <property type="component" value="Chromosome"/>
</dbReference>
<dbReference type="GO" id="GO:0005737">
    <property type="term" value="C:cytoplasm"/>
    <property type="evidence" value="ECO:0007669"/>
    <property type="project" value="UniProtKB-UniRule"/>
</dbReference>
<dbReference type="GO" id="GO:0009295">
    <property type="term" value="C:nucleoid"/>
    <property type="evidence" value="ECO:0007669"/>
    <property type="project" value="UniProtKB-SubCell"/>
</dbReference>
<dbReference type="GO" id="GO:0003700">
    <property type="term" value="F:DNA-binding transcription factor activity"/>
    <property type="evidence" value="ECO:0007669"/>
    <property type="project" value="UniProtKB-UniRule"/>
</dbReference>
<dbReference type="GO" id="GO:0000976">
    <property type="term" value="F:transcription cis-regulatory region binding"/>
    <property type="evidence" value="ECO:0007669"/>
    <property type="project" value="TreeGrafter"/>
</dbReference>
<dbReference type="GO" id="GO:2000143">
    <property type="term" value="P:negative regulation of DNA-templated transcription initiation"/>
    <property type="evidence" value="ECO:0007669"/>
    <property type="project" value="TreeGrafter"/>
</dbReference>
<dbReference type="CDD" id="cd16321">
    <property type="entry name" value="MraZ_C"/>
    <property type="match status" value="1"/>
</dbReference>
<dbReference type="CDD" id="cd16320">
    <property type="entry name" value="MraZ_N"/>
    <property type="match status" value="1"/>
</dbReference>
<dbReference type="Gene3D" id="3.40.1550.20">
    <property type="entry name" value="Transcriptional regulator MraZ domain"/>
    <property type="match status" value="1"/>
</dbReference>
<dbReference type="HAMAP" id="MF_01008">
    <property type="entry name" value="MraZ"/>
    <property type="match status" value="1"/>
</dbReference>
<dbReference type="InterPro" id="IPR003444">
    <property type="entry name" value="MraZ"/>
</dbReference>
<dbReference type="InterPro" id="IPR035644">
    <property type="entry name" value="MraZ_C"/>
</dbReference>
<dbReference type="InterPro" id="IPR020603">
    <property type="entry name" value="MraZ_dom"/>
</dbReference>
<dbReference type="InterPro" id="IPR035642">
    <property type="entry name" value="MraZ_N"/>
</dbReference>
<dbReference type="InterPro" id="IPR038619">
    <property type="entry name" value="MraZ_sf"/>
</dbReference>
<dbReference type="InterPro" id="IPR007159">
    <property type="entry name" value="SpoVT-AbrB_dom"/>
</dbReference>
<dbReference type="InterPro" id="IPR037914">
    <property type="entry name" value="SpoVT-AbrB_sf"/>
</dbReference>
<dbReference type="NCBIfam" id="TIGR00242">
    <property type="entry name" value="division/cell wall cluster transcriptional repressor MraZ"/>
    <property type="match status" value="1"/>
</dbReference>
<dbReference type="PANTHER" id="PTHR34701">
    <property type="entry name" value="TRANSCRIPTIONAL REGULATOR MRAZ"/>
    <property type="match status" value="1"/>
</dbReference>
<dbReference type="PANTHER" id="PTHR34701:SF1">
    <property type="entry name" value="TRANSCRIPTIONAL REGULATOR MRAZ"/>
    <property type="match status" value="1"/>
</dbReference>
<dbReference type="Pfam" id="PF02381">
    <property type="entry name" value="MraZ"/>
    <property type="match status" value="2"/>
</dbReference>
<dbReference type="SUPFAM" id="SSF89447">
    <property type="entry name" value="AbrB/MazE/MraZ-like"/>
    <property type="match status" value="1"/>
</dbReference>
<dbReference type="PROSITE" id="PS51740">
    <property type="entry name" value="SPOVT_ABRB"/>
    <property type="match status" value="2"/>
</dbReference>
<comment type="subunit">
    <text evidence="1">Forms oligomers.</text>
</comment>
<comment type="subcellular location">
    <subcellularLocation>
        <location evidence="1">Cytoplasm</location>
        <location evidence="1">Nucleoid</location>
    </subcellularLocation>
</comment>
<comment type="similarity">
    <text evidence="1">Belongs to the MraZ family.</text>
</comment>
<reference key="1">
    <citation type="submission" date="2009-03" db="EMBL/GenBank/DDBJ databases">
        <title>Comparison of the complete genome sequences of Rhodococcus erythropolis PR4 and Rhodococcus opacus B4.</title>
        <authorList>
            <person name="Takarada H."/>
            <person name="Sekine M."/>
            <person name="Hosoyama A."/>
            <person name="Yamada R."/>
            <person name="Fujisawa T."/>
            <person name="Omata S."/>
            <person name="Shimizu A."/>
            <person name="Tsukatani N."/>
            <person name="Tanikawa S."/>
            <person name="Fujita N."/>
            <person name="Harayama S."/>
        </authorList>
    </citation>
    <scope>NUCLEOTIDE SEQUENCE [LARGE SCALE GENOMIC DNA]</scope>
    <source>
        <strain>B4</strain>
    </source>
</reference>
<accession>C1AU64</accession>
<feature type="chain" id="PRO_1000148865" description="Transcriptional regulator MraZ">
    <location>
        <begin position="1"/>
        <end position="143"/>
    </location>
</feature>
<feature type="domain" description="SpoVT-AbrB 1" evidence="2">
    <location>
        <begin position="5"/>
        <end position="47"/>
    </location>
</feature>
<feature type="domain" description="SpoVT-AbrB 2" evidence="2">
    <location>
        <begin position="76"/>
        <end position="119"/>
    </location>
</feature>
<sequence>MFLGTYTPKLDDKGRLTLPAKFRDALAGGLMVTKGQDHSLAVYPREEFTALARKAAAASRSDPEARAFVRGLAAGTDEQHADAQGRITLSADHRRYAGLSKDCVVIGSVDFLEIWDAQAWQTYVEANEENYSQATGIALGEIV</sequence>